<feature type="chain" id="PRO_0000093086" description="UvrABC system protein A">
    <location>
        <begin position="1"/>
        <end position="941"/>
    </location>
</feature>
<feature type="domain" description="ABC transporter 1" evidence="2">
    <location>
        <begin position="310"/>
        <end position="587"/>
    </location>
</feature>
<feature type="domain" description="ABC transporter 2" evidence="2">
    <location>
        <begin position="607"/>
        <end position="937"/>
    </location>
</feature>
<feature type="zinc finger region" description="C4-type" evidence="2">
    <location>
        <begin position="253"/>
        <end position="280"/>
    </location>
</feature>
<feature type="zinc finger region" description="C4-type" evidence="2">
    <location>
        <begin position="740"/>
        <end position="766"/>
    </location>
</feature>
<feature type="binding site">
    <location>
        <begin position="31"/>
        <end position="38"/>
    </location>
    <ligand>
        <name>ATP</name>
        <dbReference type="ChEBI" id="CHEBI:30616"/>
    </ligand>
</feature>
<feature type="binding site">
    <location>
        <begin position="640"/>
        <end position="647"/>
    </location>
    <ligand>
        <name>ATP</name>
        <dbReference type="ChEBI" id="CHEBI:30616"/>
    </ligand>
</feature>
<accession>P0A195</accession>
<accession>P37434</accession>
<evidence type="ECO:0000250" key="1"/>
<evidence type="ECO:0000255" key="2">
    <source>
        <dbReference type="HAMAP-Rule" id="MF_00205"/>
    </source>
</evidence>
<keyword id="KW-0067">ATP-binding</keyword>
<keyword id="KW-0963">Cytoplasm</keyword>
<keyword id="KW-0227">DNA damage</keyword>
<keyword id="KW-0228">DNA excision</keyword>
<keyword id="KW-0234">DNA repair</keyword>
<keyword id="KW-0238">DNA-binding</keyword>
<keyword id="KW-0267">Excision nuclease</keyword>
<keyword id="KW-0479">Metal-binding</keyword>
<keyword id="KW-0547">Nucleotide-binding</keyword>
<keyword id="KW-1185">Reference proteome</keyword>
<keyword id="KW-0677">Repeat</keyword>
<keyword id="KW-0742">SOS response</keyword>
<keyword id="KW-0862">Zinc</keyword>
<keyword id="KW-0863">Zinc-finger</keyword>
<comment type="function">
    <text evidence="2">The UvrABC repair system catalyzes the recognition and processing of DNA lesions. UvrA is an ATPase and a DNA-binding protein. A damage recognition complex composed of 2 UvrA and 2 UvrB subunits scans DNA for abnormalities. When the presence of a lesion has been verified by UvrB, the UvrA molecules dissociate.</text>
</comment>
<comment type="subunit">
    <text evidence="2">Forms a heterotetramer with UvrB during the search for lesions.</text>
</comment>
<comment type="subcellular location">
    <subcellularLocation>
        <location evidence="2">Cytoplasm</location>
    </subcellularLocation>
</comment>
<comment type="miscellaneous">
    <text evidence="1">Binds about 2 zinc atoms/molecule.</text>
</comment>
<comment type="similarity">
    <text evidence="2">Belongs to the ABC transporter superfamily. UvrA family.</text>
</comment>
<dbReference type="EMBL" id="M93014">
    <property type="protein sequence ID" value="AAA27250.1"/>
    <property type="molecule type" value="Genomic_DNA"/>
</dbReference>
<dbReference type="EMBL" id="AE006468">
    <property type="protein sequence ID" value="AAL23078.1"/>
    <property type="molecule type" value="Genomic_DNA"/>
</dbReference>
<dbReference type="RefSeq" id="NP_463119.1">
    <property type="nucleotide sequence ID" value="NC_003197.2"/>
</dbReference>
<dbReference type="RefSeq" id="WP_000357724.1">
    <property type="nucleotide sequence ID" value="NC_003197.2"/>
</dbReference>
<dbReference type="SMR" id="P0A195"/>
<dbReference type="STRING" id="99287.STM4254"/>
<dbReference type="PaxDb" id="99287-STM4254"/>
<dbReference type="GeneID" id="1255780"/>
<dbReference type="KEGG" id="stm:STM4254"/>
<dbReference type="PATRIC" id="fig|99287.12.peg.4474"/>
<dbReference type="HOGENOM" id="CLU_001370_0_2_6"/>
<dbReference type="OMA" id="EFFKAVP"/>
<dbReference type="PhylomeDB" id="P0A195"/>
<dbReference type="BioCyc" id="SENT99287:STM4254-MONOMER"/>
<dbReference type="Proteomes" id="UP000001014">
    <property type="component" value="Chromosome"/>
</dbReference>
<dbReference type="GO" id="GO:0005737">
    <property type="term" value="C:cytoplasm"/>
    <property type="evidence" value="ECO:0007669"/>
    <property type="project" value="UniProtKB-SubCell"/>
</dbReference>
<dbReference type="GO" id="GO:0009380">
    <property type="term" value="C:excinuclease repair complex"/>
    <property type="evidence" value="ECO:0007669"/>
    <property type="project" value="InterPro"/>
</dbReference>
<dbReference type="GO" id="GO:0005524">
    <property type="term" value="F:ATP binding"/>
    <property type="evidence" value="ECO:0007669"/>
    <property type="project" value="UniProtKB-UniRule"/>
</dbReference>
<dbReference type="GO" id="GO:0016887">
    <property type="term" value="F:ATP hydrolysis activity"/>
    <property type="evidence" value="ECO:0007669"/>
    <property type="project" value="InterPro"/>
</dbReference>
<dbReference type="GO" id="GO:0003677">
    <property type="term" value="F:DNA binding"/>
    <property type="evidence" value="ECO:0007669"/>
    <property type="project" value="UniProtKB-UniRule"/>
</dbReference>
<dbReference type="GO" id="GO:0009381">
    <property type="term" value="F:excinuclease ABC activity"/>
    <property type="evidence" value="ECO:0007669"/>
    <property type="project" value="UniProtKB-UniRule"/>
</dbReference>
<dbReference type="GO" id="GO:0008270">
    <property type="term" value="F:zinc ion binding"/>
    <property type="evidence" value="ECO:0007669"/>
    <property type="project" value="UniProtKB-UniRule"/>
</dbReference>
<dbReference type="GO" id="GO:0006289">
    <property type="term" value="P:nucleotide-excision repair"/>
    <property type="evidence" value="ECO:0007669"/>
    <property type="project" value="UniProtKB-UniRule"/>
</dbReference>
<dbReference type="GO" id="GO:0009432">
    <property type="term" value="P:SOS response"/>
    <property type="evidence" value="ECO:0007669"/>
    <property type="project" value="UniProtKB-UniRule"/>
</dbReference>
<dbReference type="CDD" id="cd03270">
    <property type="entry name" value="ABC_UvrA_I"/>
    <property type="match status" value="1"/>
</dbReference>
<dbReference type="CDD" id="cd03271">
    <property type="entry name" value="ABC_UvrA_II"/>
    <property type="match status" value="1"/>
</dbReference>
<dbReference type="FunFam" id="1.10.8.280:FF:000001">
    <property type="entry name" value="UvrABC system protein A"/>
    <property type="match status" value="1"/>
</dbReference>
<dbReference type="FunFam" id="1.20.1580.10:FF:000002">
    <property type="entry name" value="UvrABC system protein A"/>
    <property type="match status" value="1"/>
</dbReference>
<dbReference type="FunFam" id="1.20.1580.10:FF:000003">
    <property type="entry name" value="UvrABC system protein A"/>
    <property type="match status" value="1"/>
</dbReference>
<dbReference type="FunFam" id="3.30.190.20:FF:000003">
    <property type="entry name" value="UvrABC system protein A"/>
    <property type="match status" value="1"/>
</dbReference>
<dbReference type="Gene3D" id="1.10.8.280">
    <property type="entry name" value="ABC transporter ATPase domain-like"/>
    <property type="match status" value="1"/>
</dbReference>
<dbReference type="Gene3D" id="1.20.1580.10">
    <property type="entry name" value="ABC transporter ATPase like domain"/>
    <property type="match status" value="2"/>
</dbReference>
<dbReference type="Gene3D" id="3.30.1490.20">
    <property type="entry name" value="ATP-grasp fold, A domain"/>
    <property type="match status" value="1"/>
</dbReference>
<dbReference type="Gene3D" id="3.40.50.300">
    <property type="entry name" value="P-loop containing nucleotide triphosphate hydrolases"/>
    <property type="match status" value="2"/>
</dbReference>
<dbReference type="HAMAP" id="MF_00205">
    <property type="entry name" value="UvrA"/>
    <property type="match status" value="1"/>
</dbReference>
<dbReference type="InterPro" id="IPR003439">
    <property type="entry name" value="ABC_transporter-like_ATP-bd"/>
</dbReference>
<dbReference type="InterPro" id="IPR017871">
    <property type="entry name" value="ABC_transporter-like_CS"/>
</dbReference>
<dbReference type="InterPro" id="IPR013815">
    <property type="entry name" value="ATP_grasp_subdomain_1"/>
</dbReference>
<dbReference type="InterPro" id="IPR027417">
    <property type="entry name" value="P-loop_NTPase"/>
</dbReference>
<dbReference type="InterPro" id="IPR004602">
    <property type="entry name" value="UvrA"/>
</dbReference>
<dbReference type="InterPro" id="IPR041552">
    <property type="entry name" value="UvrA_DNA-bd"/>
</dbReference>
<dbReference type="InterPro" id="IPR041102">
    <property type="entry name" value="UvrA_inter"/>
</dbReference>
<dbReference type="NCBIfam" id="NF001503">
    <property type="entry name" value="PRK00349.1"/>
    <property type="match status" value="1"/>
</dbReference>
<dbReference type="NCBIfam" id="TIGR00630">
    <property type="entry name" value="uvra"/>
    <property type="match status" value="1"/>
</dbReference>
<dbReference type="PANTHER" id="PTHR43152">
    <property type="entry name" value="UVRABC SYSTEM PROTEIN A"/>
    <property type="match status" value="1"/>
</dbReference>
<dbReference type="PANTHER" id="PTHR43152:SF3">
    <property type="entry name" value="UVRABC SYSTEM PROTEIN A"/>
    <property type="match status" value="1"/>
</dbReference>
<dbReference type="Pfam" id="PF00005">
    <property type="entry name" value="ABC_tran"/>
    <property type="match status" value="1"/>
</dbReference>
<dbReference type="Pfam" id="PF17755">
    <property type="entry name" value="UvrA_DNA-bind"/>
    <property type="match status" value="1"/>
</dbReference>
<dbReference type="Pfam" id="PF17760">
    <property type="entry name" value="UvrA_inter"/>
    <property type="match status" value="1"/>
</dbReference>
<dbReference type="SUPFAM" id="SSF52540">
    <property type="entry name" value="P-loop containing nucleoside triphosphate hydrolases"/>
    <property type="match status" value="2"/>
</dbReference>
<dbReference type="PROSITE" id="PS00211">
    <property type="entry name" value="ABC_TRANSPORTER_1"/>
    <property type="match status" value="2"/>
</dbReference>
<dbReference type="PROSITE" id="PS50893">
    <property type="entry name" value="ABC_TRANSPORTER_2"/>
    <property type="match status" value="1"/>
</dbReference>
<sequence length="941" mass="103928">MDKIEVRGARTHNLKNINLVIPRDKLIVVTGLSGSGKSSLAFDTLYAEGQRRYVESLSAYARQFLSLMEKPDVDHIEGLSPAISIEQKSTSHNPRSTVGTITEIHDYLRLLFARVGEPRCPDHDVPLAAQTVSQMVDNVLSQPEGKRLMLLAPIIKERKGEHTKTLENLASQGYIRARIDGEVCDLSDPPKLELQKKHTIEVVIDRFKVRNDLSQRLAESFETALELSGGTAVVADMDDEKAEELLFSANFACPICGYSMRELEPRLFSFNNPAGACPTCDGLGVQQYFDPDRVIQNPDLSLAGGAIRGWDRRNFYYFQMLKSLAEHYKFDVDAPWASLSANVHKVVLYGSGKENIEFKYMNDRGDTSVRRHPFEGVLHNMERRYKETESSAVREELAKFISNRPCASCEGTRLNREARHVFVENTPLPAISDMSIGHAMDFFTNLKLSGQRAKIAEKVLKEIGDRLKFLVNVGLNYLTLSRSAETLSGGEAQRIRLASQIGAGLVGVMYVLDEPSIGLHQRDNERLLGTLIHLRNLGNTVIVVEHDEDAIRAADHVIDIGPGAGVHGGEVVAEGPLEAIMAVPESLTGQYMSGKRKIEVPKQRVPANPEKVLKLTGARGNNLKDVTLTLPVGLFTCITGVSGSGKSTLINDTLFPIAQRQLNGATIAEPAPYRDIQGLEHFDKVIDIDQSPIGRTPRSNPATYTGVFTPVRELFAGVPESRSRGYTPGRFSFNVRGGRCEACQGDGVIKVEMHFLPDIYVPCDQCKGKRYNRETLEIKYKGKTIHEVLDMTIEEAREFFDAVPALARKLQTLMDVGLTYIRLGQSATTLSGGEAQRVKLARELSKRGTGQTLYILDEPTTGLHFADIQQLLDVLHQLRDQGNTIVVIEHNLDVIKTADWIVDLGPEGGSGGGEILVAGTPETVAECEASHTARFLKPMLK</sequence>
<protein>
    <recommendedName>
        <fullName evidence="2">UvrABC system protein A</fullName>
        <shortName evidence="2">UvrA protein</shortName>
    </recommendedName>
    <alternativeName>
        <fullName evidence="2">Excinuclease ABC subunit A</fullName>
    </alternativeName>
</protein>
<organism>
    <name type="scientific">Salmonella typhimurium (strain LT2 / SGSC1412 / ATCC 700720)</name>
    <dbReference type="NCBI Taxonomy" id="99287"/>
    <lineage>
        <taxon>Bacteria</taxon>
        <taxon>Pseudomonadati</taxon>
        <taxon>Pseudomonadota</taxon>
        <taxon>Gammaproteobacteria</taxon>
        <taxon>Enterobacterales</taxon>
        <taxon>Enterobacteriaceae</taxon>
        <taxon>Salmonella</taxon>
    </lineage>
</organism>
<name>UVRA_SALTY</name>
<gene>
    <name evidence="2" type="primary">uvrA</name>
    <name type="ordered locus">STM4254</name>
</gene>
<proteinExistence type="inferred from homology"/>
<reference key="1">
    <citation type="submission" date="1992-08" db="EMBL/GenBank/DDBJ databases">
        <authorList>
            <person name="Alberti M."/>
            <person name="Li Y.F."/>
            <person name="Sancar A."/>
            <person name="Hearst J.E."/>
        </authorList>
    </citation>
    <scope>NUCLEOTIDE SEQUENCE [GENOMIC DNA]</scope>
    <source>
        <strain>NM522</strain>
    </source>
</reference>
<reference key="2">
    <citation type="journal article" date="2001" name="Nature">
        <title>Complete genome sequence of Salmonella enterica serovar Typhimurium LT2.</title>
        <authorList>
            <person name="McClelland M."/>
            <person name="Sanderson K.E."/>
            <person name="Spieth J."/>
            <person name="Clifton S.W."/>
            <person name="Latreille P."/>
            <person name="Courtney L."/>
            <person name="Porwollik S."/>
            <person name="Ali J."/>
            <person name="Dante M."/>
            <person name="Du F."/>
            <person name="Hou S."/>
            <person name="Layman D."/>
            <person name="Leonard S."/>
            <person name="Nguyen C."/>
            <person name="Scott K."/>
            <person name="Holmes A."/>
            <person name="Grewal N."/>
            <person name="Mulvaney E."/>
            <person name="Ryan E."/>
            <person name="Sun H."/>
            <person name="Florea L."/>
            <person name="Miller W."/>
            <person name="Stoneking T."/>
            <person name="Nhan M."/>
            <person name="Waterston R."/>
            <person name="Wilson R.K."/>
        </authorList>
    </citation>
    <scope>NUCLEOTIDE SEQUENCE [LARGE SCALE GENOMIC DNA]</scope>
    <source>
        <strain>LT2 / SGSC1412 / ATCC 700720</strain>
    </source>
</reference>